<feature type="chain" id="PRO_1000084314" description="2,3-bisphosphoglycerate-independent phosphoglycerate mutase">
    <location>
        <begin position="1"/>
        <end position="514"/>
    </location>
</feature>
<feature type="active site" description="Phosphoserine intermediate" evidence="1">
    <location>
        <position position="64"/>
    </location>
</feature>
<feature type="binding site" evidence="1">
    <location>
        <position position="14"/>
    </location>
    <ligand>
        <name>Mn(2+)</name>
        <dbReference type="ChEBI" id="CHEBI:29035"/>
        <label>2</label>
    </ligand>
</feature>
<feature type="binding site" evidence="1">
    <location>
        <position position="64"/>
    </location>
    <ligand>
        <name>Mn(2+)</name>
        <dbReference type="ChEBI" id="CHEBI:29035"/>
        <label>2</label>
    </ligand>
</feature>
<feature type="binding site" evidence="1">
    <location>
        <position position="125"/>
    </location>
    <ligand>
        <name>substrate</name>
    </ligand>
</feature>
<feature type="binding site" evidence="1">
    <location>
        <begin position="155"/>
        <end position="156"/>
    </location>
    <ligand>
        <name>substrate</name>
    </ligand>
</feature>
<feature type="binding site" evidence="1">
    <location>
        <position position="187"/>
    </location>
    <ligand>
        <name>substrate</name>
    </ligand>
</feature>
<feature type="binding site" evidence="1">
    <location>
        <position position="193"/>
    </location>
    <ligand>
        <name>substrate</name>
    </ligand>
</feature>
<feature type="binding site" evidence="1">
    <location>
        <begin position="263"/>
        <end position="266"/>
    </location>
    <ligand>
        <name>substrate</name>
    </ligand>
</feature>
<feature type="binding site" evidence="1">
    <location>
        <position position="336"/>
    </location>
    <ligand>
        <name>substrate</name>
    </ligand>
</feature>
<feature type="binding site" evidence="1">
    <location>
        <position position="403"/>
    </location>
    <ligand>
        <name>Mn(2+)</name>
        <dbReference type="ChEBI" id="CHEBI:29035"/>
        <label>1</label>
    </ligand>
</feature>
<feature type="binding site" evidence="1">
    <location>
        <position position="407"/>
    </location>
    <ligand>
        <name>Mn(2+)</name>
        <dbReference type="ChEBI" id="CHEBI:29035"/>
        <label>1</label>
    </ligand>
</feature>
<feature type="binding site" evidence="1">
    <location>
        <position position="444"/>
    </location>
    <ligand>
        <name>Mn(2+)</name>
        <dbReference type="ChEBI" id="CHEBI:29035"/>
        <label>2</label>
    </ligand>
</feature>
<feature type="binding site" evidence="1">
    <location>
        <position position="445"/>
    </location>
    <ligand>
        <name>Mn(2+)</name>
        <dbReference type="ChEBI" id="CHEBI:29035"/>
        <label>2</label>
    </ligand>
</feature>
<feature type="binding site" evidence="1">
    <location>
        <position position="463"/>
    </location>
    <ligand>
        <name>Mn(2+)</name>
        <dbReference type="ChEBI" id="CHEBI:29035"/>
        <label>1</label>
    </ligand>
</feature>
<proteinExistence type="inferred from homology"/>
<dbReference type="EC" id="5.4.2.12" evidence="1"/>
<dbReference type="EMBL" id="CP000821">
    <property type="protein sequence ID" value="ABV39072.1"/>
    <property type="molecule type" value="Genomic_DNA"/>
</dbReference>
<dbReference type="RefSeq" id="WP_012144799.1">
    <property type="nucleotide sequence ID" value="NC_009831.1"/>
</dbReference>
<dbReference type="SMR" id="A8G1U9"/>
<dbReference type="STRING" id="425104.Ssed_4470"/>
<dbReference type="KEGG" id="sse:Ssed_4470"/>
<dbReference type="eggNOG" id="COG0696">
    <property type="taxonomic scope" value="Bacteria"/>
</dbReference>
<dbReference type="HOGENOM" id="CLU_026099_2_0_6"/>
<dbReference type="OrthoDB" id="9800863at2"/>
<dbReference type="UniPathway" id="UPA00109">
    <property type="reaction ID" value="UER00186"/>
</dbReference>
<dbReference type="Proteomes" id="UP000002015">
    <property type="component" value="Chromosome"/>
</dbReference>
<dbReference type="GO" id="GO:0005829">
    <property type="term" value="C:cytosol"/>
    <property type="evidence" value="ECO:0007669"/>
    <property type="project" value="TreeGrafter"/>
</dbReference>
<dbReference type="GO" id="GO:0030145">
    <property type="term" value="F:manganese ion binding"/>
    <property type="evidence" value="ECO:0007669"/>
    <property type="project" value="UniProtKB-UniRule"/>
</dbReference>
<dbReference type="GO" id="GO:0004619">
    <property type="term" value="F:phosphoglycerate mutase activity"/>
    <property type="evidence" value="ECO:0007669"/>
    <property type="project" value="UniProtKB-EC"/>
</dbReference>
<dbReference type="GO" id="GO:0006007">
    <property type="term" value="P:glucose catabolic process"/>
    <property type="evidence" value="ECO:0007669"/>
    <property type="project" value="InterPro"/>
</dbReference>
<dbReference type="GO" id="GO:0006096">
    <property type="term" value="P:glycolytic process"/>
    <property type="evidence" value="ECO:0007669"/>
    <property type="project" value="UniProtKB-UniRule"/>
</dbReference>
<dbReference type="CDD" id="cd16010">
    <property type="entry name" value="iPGM"/>
    <property type="match status" value="1"/>
</dbReference>
<dbReference type="FunFam" id="3.40.1450.10:FF:000001">
    <property type="entry name" value="2,3-bisphosphoglycerate-independent phosphoglycerate mutase"/>
    <property type="match status" value="1"/>
</dbReference>
<dbReference type="FunFam" id="3.40.720.10:FF:000001">
    <property type="entry name" value="2,3-bisphosphoglycerate-independent phosphoglycerate mutase"/>
    <property type="match status" value="1"/>
</dbReference>
<dbReference type="Gene3D" id="3.40.720.10">
    <property type="entry name" value="Alkaline Phosphatase, subunit A"/>
    <property type="match status" value="1"/>
</dbReference>
<dbReference type="Gene3D" id="3.40.1450.10">
    <property type="entry name" value="BPG-independent phosphoglycerate mutase, domain B"/>
    <property type="match status" value="1"/>
</dbReference>
<dbReference type="HAMAP" id="MF_01038">
    <property type="entry name" value="GpmI"/>
    <property type="match status" value="1"/>
</dbReference>
<dbReference type="InterPro" id="IPR017850">
    <property type="entry name" value="Alkaline_phosphatase_core_sf"/>
</dbReference>
<dbReference type="InterPro" id="IPR011258">
    <property type="entry name" value="BPG-indep_PGM_N"/>
</dbReference>
<dbReference type="InterPro" id="IPR006124">
    <property type="entry name" value="Metalloenzyme"/>
</dbReference>
<dbReference type="InterPro" id="IPR036646">
    <property type="entry name" value="PGAM_B_sf"/>
</dbReference>
<dbReference type="InterPro" id="IPR005995">
    <property type="entry name" value="Pgm_bpd_ind"/>
</dbReference>
<dbReference type="NCBIfam" id="TIGR01307">
    <property type="entry name" value="pgm_bpd_ind"/>
    <property type="match status" value="1"/>
</dbReference>
<dbReference type="NCBIfam" id="NF003897">
    <property type="entry name" value="PRK05434.1-5"/>
    <property type="match status" value="1"/>
</dbReference>
<dbReference type="PANTHER" id="PTHR31637">
    <property type="entry name" value="2,3-BISPHOSPHOGLYCERATE-INDEPENDENT PHOSPHOGLYCERATE MUTASE"/>
    <property type="match status" value="1"/>
</dbReference>
<dbReference type="PANTHER" id="PTHR31637:SF0">
    <property type="entry name" value="2,3-BISPHOSPHOGLYCERATE-INDEPENDENT PHOSPHOGLYCERATE MUTASE"/>
    <property type="match status" value="1"/>
</dbReference>
<dbReference type="Pfam" id="PF06415">
    <property type="entry name" value="iPGM_N"/>
    <property type="match status" value="1"/>
</dbReference>
<dbReference type="Pfam" id="PF01676">
    <property type="entry name" value="Metalloenzyme"/>
    <property type="match status" value="1"/>
</dbReference>
<dbReference type="PIRSF" id="PIRSF001492">
    <property type="entry name" value="IPGAM"/>
    <property type="match status" value="1"/>
</dbReference>
<dbReference type="SUPFAM" id="SSF64158">
    <property type="entry name" value="2,3-Bisphosphoglycerate-independent phosphoglycerate mutase, substrate-binding domain"/>
    <property type="match status" value="1"/>
</dbReference>
<dbReference type="SUPFAM" id="SSF53649">
    <property type="entry name" value="Alkaline phosphatase-like"/>
    <property type="match status" value="1"/>
</dbReference>
<accession>A8G1U9</accession>
<protein>
    <recommendedName>
        <fullName evidence="1">2,3-bisphosphoglycerate-independent phosphoglycerate mutase</fullName>
        <shortName evidence="1">BPG-independent PGAM</shortName>
        <shortName evidence="1">Phosphoglyceromutase</shortName>
        <shortName evidence="1">iPGM</shortName>
        <ecNumber evidence="1">5.4.2.12</ecNumber>
    </recommendedName>
</protein>
<keyword id="KW-0324">Glycolysis</keyword>
<keyword id="KW-0413">Isomerase</keyword>
<keyword id="KW-0464">Manganese</keyword>
<keyword id="KW-0479">Metal-binding</keyword>
<keyword id="KW-1185">Reference proteome</keyword>
<reference key="1">
    <citation type="submission" date="2007-08" db="EMBL/GenBank/DDBJ databases">
        <title>Complete sequence of Shewanella sediminis HAW-EB3.</title>
        <authorList>
            <consortium name="US DOE Joint Genome Institute"/>
            <person name="Copeland A."/>
            <person name="Lucas S."/>
            <person name="Lapidus A."/>
            <person name="Barry K."/>
            <person name="Glavina del Rio T."/>
            <person name="Dalin E."/>
            <person name="Tice H."/>
            <person name="Pitluck S."/>
            <person name="Chertkov O."/>
            <person name="Brettin T."/>
            <person name="Bruce D."/>
            <person name="Detter J.C."/>
            <person name="Han C."/>
            <person name="Schmutz J."/>
            <person name="Larimer F."/>
            <person name="Land M."/>
            <person name="Hauser L."/>
            <person name="Kyrpides N."/>
            <person name="Kim E."/>
            <person name="Zhao J.-S."/>
            <person name="Richardson P."/>
        </authorList>
    </citation>
    <scope>NUCLEOTIDE SEQUENCE [LARGE SCALE GENOMIC DNA]</scope>
    <source>
        <strain>HAW-EB3</strain>
    </source>
</reference>
<organism>
    <name type="scientific">Shewanella sediminis (strain HAW-EB3)</name>
    <dbReference type="NCBI Taxonomy" id="425104"/>
    <lineage>
        <taxon>Bacteria</taxon>
        <taxon>Pseudomonadati</taxon>
        <taxon>Pseudomonadota</taxon>
        <taxon>Gammaproteobacteria</taxon>
        <taxon>Alteromonadales</taxon>
        <taxon>Shewanellaceae</taxon>
        <taxon>Shewanella</taxon>
    </lineage>
</organism>
<comment type="function">
    <text evidence="1">Catalyzes the interconversion of 2-phosphoglycerate and 3-phosphoglycerate.</text>
</comment>
<comment type="catalytic activity">
    <reaction evidence="1">
        <text>(2R)-2-phosphoglycerate = (2R)-3-phosphoglycerate</text>
        <dbReference type="Rhea" id="RHEA:15901"/>
        <dbReference type="ChEBI" id="CHEBI:58272"/>
        <dbReference type="ChEBI" id="CHEBI:58289"/>
        <dbReference type="EC" id="5.4.2.12"/>
    </reaction>
</comment>
<comment type="cofactor">
    <cofactor evidence="1">
        <name>Mn(2+)</name>
        <dbReference type="ChEBI" id="CHEBI:29035"/>
    </cofactor>
    <text evidence="1">Binds 2 manganese ions per subunit.</text>
</comment>
<comment type="pathway">
    <text evidence="1">Carbohydrate degradation; glycolysis; pyruvate from D-glyceraldehyde 3-phosphate: step 3/5.</text>
</comment>
<comment type="subunit">
    <text evidence="1">Monomer.</text>
</comment>
<comment type="similarity">
    <text evidence="1">Belongs to the BPG-independent phosphoglycerate mutase family.</text>
</comment>
<gene>
    <name evidence="1" type="primary">gpmI</name>
    <name type="ordered locus">Ssed_4470</name>
</gene>
<evidence type="ECO:0000255" key="1">
    <source>
        <dbReference type="HAMAP-Rule" id="MF_01038"/>
    </source>
</evidence>
<sequence length="514" mass="56089">MTTRKRPLALLILDGWGYRENTQKNAVYHANTPVLDRLNAQYPNSLISGSGLDVGLPDGQMGNSEVGHINIGSGRIVYQELTRIGKAIEDGEFDKNQALVESIDKAIANQGAVHIMGLLSPGGVHSHESHIEAMCRLAVARGAKQVYLHAFLDGRDTPPRSAKGSLAHFDDLFTTLGTGRVASVIGRYYAMDRDNRWDRVSQAYELITEGKSLHQYSNAVEALEAAYARDENDEFVGSSAILDAQGDSAQLADGDALIFMNFRADRARQITRSFVDADFDGFERNVTPKAHFVMLTEYAADIKAAIAYPSTNLVNTLGEALQDSDKTQLRISETEKYAHVTFFFNGGKEEPFKGEDRILIQSPKVATYDLQPEMSSAELTDKLVEAIESTKYDVIICNYPNGDMVGHTGSFDAAVKACEAVDTCIGRVVDALAKVDGECLITADHGNAEQMTDEQTGQAHTAHTSELVPLIYVGRNGSIENDGRLSDLAPTMLTLMGEEVPSEMTGRSIIKLDE</sequence>
<name>GPMI_SHESH</name>